<gene>
    <name type="ordered locus">SAB0821</name>
</gene>
<organism>
    <name type="scientific">Staphylococcus aureus (strain bovine RF122 / ET3-1)</name>
    <dbReference type="NCBI Taxonomy" id="273036"/>
    <lineage>
        <taxon>Bacteria</taxon>
        <taxon>Bacillati</taxon>
        <taxon>Bacillota</taxon>
        <taxon>Bacilli</taxon>
        <taxon>Bacillales</taxon>
        <taxon>Staphylococcaceae</taxon>
        <taxon>Staphylococcus</taxon>
    </lineage>
</organism>
<protein>
    <recommendedName>
        <fullName>Putative peptidyl-prolyl cis-trans isomerase</fullName>
        <shortName>PPIase</shortName>
        <ecNumber>5.2.1.8</ecNumber>
    </recommendedName>
    <alternativeName>
        <fullName>Rotamase</fullName>
    </alternativeName>
</protein>
<keyword id="KW-0413">Isomerase</keyword>
<keyword id="KW-0697">Rotamase</keyword>
<proteinExistence type="inferred from homology"/>
<comment type="function">
    <text evidence="1">PPIases accelerate the folding of proteins. It catalyzes the cis-trans isomerization of proline imidic peptide bonds in oligopeptides (By similarity).</text>
</comment>
<comment type="catalytic activity">
    <reaction>
        <text>[protein]-peptidylproline (omega=180) = [protein]-peptidylproline (omega=0)</text>
        <dbReference type="Rhea" id="RHEA:16237"/>
        <dbReference type="Rhea" id="RHEA-COMP:10747"/>
        <dbReference type="Rhea" id="RHEA-COMP:10748"/>
        <dbReference type="ChEBI" id="CHEBI:83833"/>
        <dbReference type="ChEBI" id="CHEBI:83834"/>
        <dbReference type="EC" id="5.2.1.8"/>
    </reaction>
</comment>
<comment type="similarity">
    <text evidence="3">Belongs to the cyclophilin-type PPIase family.</text>
</comment>
<sequence>MANYPQLNKEVQQGEIKVVMHTNKGDMTFKLFPNIAPKTVENFVTHAKNGYYDGITFHRVINDFMIQGGDPTATGMGGESIYGGAFEDEFSLNAFNLYGALSMANSGPNTNGSQFFIVQMKEVPQNMLSQLADGGWPQPIVDAYGEKGGTPWLDQKHTVFGQIIDGETTLEDIANTKVGPQDKPLHDVVIESIDVEE</sequence>
<reference key="1">
    <citation type="journal article" date="2007" name="PLoS ONE">
        <title>Molecular correlates of host specialization in Staphylococcus aureus.</title>
        <authorList>
            <person name="Herron-Olson L."/>
            <person name="Fitzgerald J.R."/>
            <person name="Musser J.M."/>
            <person name="Kapur V."/>
        </authorList>
    </citation>
    <scope>NUCLEOTIDE SEQUENCE [LARGE SCALE GENOMIC DNA]</scope>
    <source>
        <strain>bovine RF122 / ET3-1</strain>
    </source>
</reference>
<name>PPI1_STAAB</name>
<evidence type="ECO:0000250" key="1"/>
<evidence type="ECO:0000255" key="2">
    <source>
        <dbReference type="PROSITE-ProRule" id="PRU00156"/>
    </source>
</evidence>
<evidence type="ECO:0000305" key="3"/>
<accession>Q2YWT2</accession>
<dbReference type="EC" id="5.2.1.8"/>
<dbReference type="EMBL" id="AJ938182">
    <property type="protein sequence ID" value="CAI80509.1"/>
    <property type="molecule type" value="Genomic_DNA"/>
</dbReference>
<dbReference type="RefSeq" id="WP_000035058.1">
    <property type="nucleotide sequence ID" value="NC_007622.1"/>
</dbReference>
<dbReference type="SMR" id="Q2YWT2"/>
<dbReference type="KEGG" id="sab:SAB0821"/>
<dbReference type="HOGENOM" id="CLU_012062_16_0_9"/>
<dbReference type="GO" id="GO:0003755">
    <property type="term" value="F:peptidyl-prolyl cis-trans isomerase activity"/>
    <property type="evidence" value="ECO:0007669"/>
    <property type="project" value="UniProtKB-KW"/>
</dbReference>
<dbReference type="Gene3D" id="2.40.100.10">
    <property type="entry name" value="Cyclophilin-like"/>
    <property type="match status" value="1"/>
</dbReference>
<dbReference type="InterPro" id="IPR029000">
    <property type="entry name" value="Cyclophilin-like_dom_sf"/>
</dbReference>
<dbReference type="InterPro" id="IPR024936">
    <property type="entry name" value="Cyclophilin-type_PPIase"/>
</dbReference>
<dbReference type="InterPro" id="IPR002130">
    <property type="entry name" value="Cyclophilin-type_PPIase_dom"/>
</dbReference>
<dbReference type="InterPro" id="IPR044666">
    <property type="entry name" value="Cyclophilin_A-like"/>
</dbReference>
<dbReference type="PANTHER" id="PTHR45625">
    <property type="entry name" value="PEPTIDYL-PROLYL CIS-TRANS ISOMERASE-RELATED"/>
    <property type="match status" value="1"/>
</dbReference>
<dbReference type="PANTHER" id="PTHR45625:SF4">
    <property type="entry name" value="PEPTIDYLPROLYL ISOMERASE DOMAIN AND WD REPEAT-CONTAINING PROTEIN 1"/>
    <property type="match status" value="1"/>
</dbReference>
<dbReference type="Pfam" id="PF00160">
    <property type="entry name" value="Pro_isomerase"/>
    <property type="match status" value="1"/>
</dbReference>
<dbReference type="PIRSF" id="PIRSF001467">
    <property type="entry name" value="Peptidylpro_ismrse"/>
    <property type="match status" value="1"/>
</dbReference>
<dbReference type="PRINTS" id="PR00153">
    <property type="entry name" value="CSAPPISMRASE"/>
</dbReference>
<dbReference type="SUPFAM" id="SSF50891">
    <property type="entry name" value="Cyclophilin-like"/>
    <property type="match status" value="1"/>
</dbReference>
<dbReference type="PROSITE" id="PS50072">
    <property type="entry name" value="CSA_PPIASE_2"/>
    <property type="match status" value="1"/>
</dbReference>
<feature type="chain" id="PRO_0000299081" description="Putative peptidyl-prolyl cis-trans isomerase">
    <location>
        <begin position="1"/>
        <end position="197"/>
    </location>
</feature>
<feature type="domain" description="PPIase cyclophilin-type" evidence="2">
    <location>
        <begin position="14"/>
        <end position="195"/>
    </location>
</feature>